<dbReference type="EC" id="2.1.1.-" evidence="2"/>
<dbReference type="EMBL" id="Z75208">
    <property type="protein sequence ID" value="CAA99602.1"/>
    <property type="molecule type" value="Genomic_DNA"/>
</dbReference>
<dbReference type="EMBL" id="AL009126">
    <property type="protein sequence ID" value="CAB14825.1"/>
    <property type="molecule type" value="Genomic_DNA"/>
</dbReference>
<dbReference type="PIR" id="G69984">
    <property type="entry name" value="G69984"/>
</dbReference>
<dbReference type="RefSeq" id="WP_003246182.1">
    <property type="nucleotide sequence ID" value="NZ_OZ025638.1"/>
</dbReference>
<dbReference type="PDB" id="7QIU">
    <property type="method" value="X-ray"/>
    <property type="resolution" value="1.88 A"/>
    <property type="chains" value="A/B=1-248"/>
</dbReference>
<dbReference type="PDBsum" id="7QIU"/>
<dbReference type="SMR" id="P94538"/>
<dbReference type="FunCoup" id="P94538">
    <property type="interactions" value="429"/>
</dbReference>
<dbReference type="STRING" id="224308.BSU28650"/>
<dbReference type="PaxDb" id="224308-BSU28650"/>
<dbReference type="EnsemblBacteria" id="CAB14825">
    <property type="protein sequence ID" value="CAB14825"/>
    <property type="gene ID" value="BSU_28650"/>
</dbReference>
<dbReference type="GeneID" id="937444"/>
<dbReference type="KEGG" id="bsu:BSU28650"/>
<dbReference type="PATRIC" id="fig|224308.179.peg.3113"/>
<dbReference type="eggNOG" id="COG0566">
    <property type="taxonomic scope" value="Bacteria"/>
</dbReference>
<dbReference type="InParanoid" id="P94538"/>
<dbReference type="OrthoDB" id="9794400at2"/>
<dbReference type="PhylomeDB" id="P94538"/>
<dbReference type="BioCyc" id="BSUB:BSU28650-MONOMER"/>
<dbReference type="Proteomes" id="UP000001570">
    <property type="component" value="Chromosome"/>
</dbReference>
<dbReference type="GO" id="GO:0005737">
    <property type="term" value="C:cytoplasm"/>
    <property type="evidence" value="ECO:0007669"/>
    <property type="project" value="UniProtKB-SubCell"/>
</dbReference>
<dbReference type="GO" id="GO:0003723">
    <property type="term" value="F:RNA binding"/>
    <property type="evidence" value="ECO:0007669"/>
    <property type="project" value="InterPro"/>
</dbReference>
<dbReference type="GO" id="GO:0008173">
    <property type="term" value="F:RNA methyltransferase activity"/>
    <property type="evidence" value="ECO:0007669"/>
    <property type="project" value="InterPro"/>
</dbReference>
<dbReference type="GO" id="GO:0032259">
    <property type="term" value="P:methylation"/>
    <property type="evidence" value="ECO:0007669"/>
    <property type="project" value="UniProtKB-KW"/>
</dbReference>
<dbReference type="GO" id="GO:0006364">
    <property type="term" value="P:rRNA processing"/>
    <property type="evidence" value="ECO:0007669"/>
    <property type="project" value="UniProtKB-KW"/>
</dbReference>
<dbReference type="CDD" id="cd18095">
    <property type="entry name" value="SpoU-like_rRNA-MTase"/>
    <property type="match status" value="1"/>
</dbReference>
<dbReference type="Gene3D" id="3.30.1330.30">
    <property type="match status" value="1"/>
</dbReference>
<dbReference type="Gene3D" id="3.40.1280.10">
    <property type="match status" value="1"/>
</dbReference>
<dbReference type="InterPro" id="IPR029028">
    <property type="entry name" value="Alpha/beta_knot_MTases"/>
</dbReference>
<dbReference type="InterPro" id="IPR053888">
    <property type="entry name" value="MRM3-like_sub_bind"/>
</dbReference>
<dbReference type="InterPro" id="IPR029064">
    <property type="entry name" value="Ribosomal_eL30-like_sf"/>
</dbReference>
<dbReference type="InterPro" id="IPR051259">
    <property type="entry name" value="rRNA_Methyltransferase"/>
</dbReference>
<dbReference type="InterPro" id="IPR001537">
    <property type="entry name" value="SpoU_MeTrfase"/>
</dbReference>
<dbReference type="InterPro" id="IPR013123">
    <property type="entry name" value="SpoU_subst-bd"/>
</dbReference>
<dbReference type="InterPro" id="IPR029026">
    <property type="entry name" value="tRNA_m1G_MTases_N"/>
</dbReference>
<dbReference type="PANTHER" id="PTHR43191">
    <property type="entry name" value="RRNA METHYLTRANSFERASE 3"/>
    <property type="match status" value="1"/>
</dbReference>
<dbReference type="PANTHER" id="PTHR43191:SF2">
    <property type="entry name" value="RRNA METHYLTRANSFERASE 3, MITOCHONDRIAL"/>
    <property type="match status" value="1"/>
</dbReference>
<dbReference type="Pfam" id="PF22435">
    <property type="entry name" value="MRM3-like_sub_bind"/>
    <property type="match status" value="1"/>
</dbReference>
<dbReference type="Pfam" id="PF00588">
    <property type="entry name" value="SpoU_methylase"/>
    <property type="match status" value="1"/>
</dbReference>
<dbReference type="SMART" id="SM00967">
    <property type="entry name" value="SpoU_sub_bind"/>
    <property type="match status" value="1"/>
</dbReference>
<dbReference type="SUPFAM" id="SSF75217">
    <property type="entry name" value="alpha/beta knot"/>
    <property type="match status" value="1"/>
</dbReference>
<dbReference type="SUPFAM" id="SSF55315">
    <property type="entry name" value="L30e-like"/>
    <property type="match status" value="1"/>
</dbReference>
<feature type="chain" id="PRO_0000360765" description="23S rRNA (guanosine(2553)-2'-O)-methyltransferase RlmP">
    <location>
        <begin position="1"/>
        <end position="248"/>
    </location>
</feature>
<feature type="binding site" evidence="1">
    <location>
        <position position="123"/>
    </location>
    <ligand>
        <name>S-adenosyl-L-methionine</name>
        <dbReference type="ChEBI" id="CHEBI:59789"/>
    </ligand>
</feature>
<feature type="binding site" evidence="1">
    <location>
        <position position="204"/>
    </location>
    <ligand>
        <name>S-adenosyl-L-methionine</name>
        <dbReference type="ChEBI" id="CHEBI:59789"/>
    </ligand>
</feature>
<feature type="binding site" evidence="1">
    <location>
        <position position="224"/>
    </location>
    <ligand>
        <name>S-adenosyl-L-methionine</name>
        <dbReference type="ChEBI" id="CHEBI:59789"/>
    </ligand>
</feature>
<feature type="binding site" evidence="1">
    <location>
        <position position="233"/>
    </location>
    <ligand>
        <name>S-adenosyl-L-methionine</name>
        <dbReference type="ChEBI" id="CHEBI:59789"/>
    </ligand>
</feature>
<feature type="mutagenesis site" description="Retains weak activity." evidence="2">
    <original>N</original>
    <variation>A</variation>
    <location>
        <position position="117"/>
    </location>
</feature>
<feature type="mutagenesis site" description="Retains 15% of activity." evidence="2">
    <original>R</original>
    <variation>A</variation>
    <location>
        <position position="123"/>
    </location>
</feature>
<feature type="mutagenesis site" description="Loss of activity." evidence="2">
    <original>E</original>
    <variation>A</variation>
    <location>
        <position position="206"/>
    </location>
</feature>
<feature type="mutagenesis site" description="Loss of activity." evidence="2">
    <original>N</original>
    <variation>A</variation>
    <location>
        <position position="234"/>
    </location>
</feature>
<feature type="strand" evidence="6">
    <location>
        <begin position="2"/>
        <end position="4"/>
    </location>
</feature>
<feature type="helix" evidence="6">
    <location>
        <begin position="10"/>
        <end position="16"/>
    </location>
</feature>
<feature type="helix" evidence="6">
    <location>
        <begin position="17"/>
        <end position="19"/>
    </location>
</feature>
<feature type="helix" evidence="6">
    <location>
        <begin position="21"/>
        <end position="27"/>
    </location>
</feature>
<feature type="strand" evidence="6">
    <location>
        <begin position="29"/>
        <end position="34"/>
    </location>
</feature>
<feature type="helix" evidence="6">
    <location>
        <begin position="35"/>
        <end position="43"/>
    </location>
</feature>
<feature type="strand" evidence="6">
    <location>
        <begin position="48"/>
        <end position="55"/>
    </location>
</feature>
<feature type="helix" evidence="6">
    <location>
        <begin position="56"/>
        <end position="58"/>
    </location>
</feature>
<feature type="strand" evidence="6">
    <location>
        <begin position="68"/>
        <end position="72"/>
    </location>
</feature>
<feature type="helix" evidence="6">
    <location>
        <begin position="74"/>
        <end position="81"/>
    </location>
</feature>
<feature type="strand" evidence="6">
    <location>
        <begin position="88"/>
        <end position="94"/>
    </location>
</feature>
<feature type="turn" evidence="6">
    <location>
        <begin position="100"/>
        <end position="102"/>
    </location>
</feature>
<feature type="strand" evidence="6">
    <location>
        <begin position="105"/>
        <end position="111"/>
    </location>
</feature>
<feature type="helix" evidence="6">
    <location>
        <begin position="115"/>
        <end position="127"/>
    </location>
</feature>
<feature type="strand" evidence="6">
    <location>
        <begin position="131"/>
        <end position="135"/>
    </location>
</feature>
<feature type="helix" evidence="6">
    <location>
        <begin position="145"/>
        <end position="151"/>
    </location>
</feature>
<feature type="helix" evidence="6">
    <location>
        <begin position="154"/>
        <end position="156"/>
    </location>
</feature>
<feature type="strand" evidence="6">
    <location>
        <begin position="160"/>
        <end position="162"/>
    </location>
</feature>
<feature type="helix" evidence="6">
    <location>
        <begin position="165"/>
        <end position="174"/>
    </location>
</feature>
<feature type="strand" evidence="6">
    <location>
        <begin position="178"/>
        <end position="182"/>
    </location>
</feature>
<feature type="helix" evidence="6">
    <location>
        <begin position="190"/>
        <end position="192"/>
    </location>
</feature>
<feature type="strand" evidence="6">
    <location>
        <begin position="197"/>
        <end position="204"/>
    </location>
</feature>
<feature type="strand" evidence="6">
    <location>
        <begin position="206"/>
        <end position="208"/>
    </location>
</feature>
<feature type="helix" evidence="6">
    <location>
        <begin position="212"/>
        <end position="215"/>
    </location>
</feature>
<feature type="strand" evidence="6">
    <location>
        <begin position="219"/>
        <end position="223"/>
    </location>
</feature>
<feature type="helix" evidence="6">
    <location>
        <begin position="235"/>
        <end position="247"/>
    </location>
</feature>
<sequence>MKQIESAKNQKVKDWKKLHTKKERTKTNTFLIEGEHLVEEALKSPGIVKEILVKDETRIPSDLETGIQCYMLSEDAFSAVTETETPQQIAAVCHMPEEKLATARKVLLIDAVQDPGNLGTMIRTADAAGLDAVVLGDGTADAFNGKTLRSAQGSHFHIPVVRRNLPSYVDELKAEGVKVYGTALQNGAPYQEIPQSESFALIVGNEGAGVDAALLEKTDLNLYVPLYGQAESLNVAVAAAILVYHLRG</sequence>
<protein>
    <recommendedName>
        <fullName evidence="4">23S rRNA (guanosine(2553)-2'-O)-methyltransferase RlmP</fullName>
        <ecNumber evidence="2">2.1.1.-</ecNumber>
    </recommendedName>
    <alternativeName>
        <fullName evidence="4">23S rRNA (guanosine-2'-O-)-methyltransferase RlmP</fullName>
    </alternativeName>
</protein>
<accession>P94538</accession>
<accession>Q795X1</accession>
<name>RLMP_BACSU</name>
<keyword id="KW-0002">3D-structure</keyword>
<keyword id="KW-0963">Cytoplasm</keyword>
<keyword id="KW-0489">Methyltransferase</keyword>
<keyword id="KW-1185">Reference proteome</keyword>
<keyword id="KW-0698">rRNA processing</keyword>
<keyword id="KW-0949">S-adenosyl-L-methionine</keyword>
<keyword id="KW-0808">Transferase</keyword>
<proteinExistence type="evidence at protein level"/>
<gene>
    <name evidence="3" type="primary">rlmP</name>
    <name type="synonym">ysgA</name>
    <name type="ordered locus">BSU28650</name>
</gene>
<reference key="1">
    <citation type="journal article" date="1996" name="Microbiology">
        <title>The dnaB-pheA (256 degrees-240 degrees) region of the Bacillus subtilis chromosome containing genes responsible for stress responses, the utilization of plant cell walls and primary metabolism.</title>
        <authorList>
            <person name="Wipat A."/>
            <person name="Carter N."/>
            <person name="Brignell C.S."/>
            <person name="Guy J.B."/>
            <person name="Piper K."/>
            <person name="Sanders J."/>
            <person name="Emmerson P.T."/>
            <person name="Harwood C.R."/>
        </authorList>
    </citation>
    <scope>NUCLEOTIDE SEQUENCE [GENOMIC DNA]</scope>
    <source>
        <strain>168</strain>
    </source>
</reference>
<reference key="2">
    <citation type="journal article" date="1997" name="Nature">
        <title>The complete genome sequence of the Gram-positive bacterium Bacillus subtilis.</title>
        <authorList>
            <person name="Kunst F."/>
            <person name="Ogasawara N."/>
            <person name="Moszer I."/>
            <person name="Albertini A.M."/>
            <person name="Alloni G."/>
            <person name="Azevedo V."/>
            <person name="Bertero M.G."/>
            <person name="Bessieres P."/>
            <person name="Bolotin A."/>
            <person name="Borchert S."/>
            <person name="Borriss R."/>
            <person name="Boursier L."/>
            <person name="Brans A."/>
            <person name="Braun M."/>
            <person name="Brignell S.C."/>
            <person name="Bron S."/>
            <person name="Brouillet S."/>
            <person name="Bruschi C.V."/>
            <person name="Caldwell B."/>
            <person name="Capuano V."/>
            <person name="Carter N.M."/>
            <person name="Choi S.-K."/>
            <person name="Codani J.-J."/>
            <person name="Connerton I.F."/>
            <person name="Cummings N.J."/>
            <person name="Daniel R.A."/>
            <person name="Denizot F."/>
            <person name="Devine K.M."/>
            <person name="Duesterhoeft A."/>
            <person name="Ehrlich S.D."/>
            <person name="Emmerson P.T."/>
            <person name="Entian K.-D."/>
            <person name="Errington J."/>
            <person name="Fabret C."/>
            <person name="Ferrari E."/>
            <person name="Foulger D."/>
            <person name="Fritz C."/>
            <person name="Fujita M."/>
            <person name="Fujita Y."/>
            <person name="Fuma S."/>
            <person name="Galizzi A."/>
            <person name="Galleron N."/>
            <person name="Ghim S.-Y."/>
            <person name="Glaser P."/>
            <person name="Goffeau A."/>
            <person name="Golightly E.J."/>
            <person name="Grandi G."/>
            <person name="Guiseppi G."/>
            <person name="Guy B.J."/>
            <person name="Haga K."/>
            <person name="Haiech J."/>
            <person name="Harwood C.R."/>
            <person name="Henaut A."/>
            <person name="Hilbert H."/>
            <person name="Holsappel S."/>
            <person name="Hosono S."/>
            <person name="Hullo M.-F."/>
            <person name="Itaya M."/>
            <person name="Jones L.-M."/>
            <person name="Joris B."/>
            <person name="Karamata D."/>
            <person name="Kasahara Y."/>
            <person name="Klaerr-Blanchard M."/>
            <person name="Klein C."/>
            <person name="Kobayashi Y."/>
            <person name="Koetter P."/>
            <person name="Koningstein G."/>
            <person name="Krogh S."/>
            <person name="Kumano M."/>
            <person name="Kurita K."/>
            <person name="Lapidus A."/>
            <person name="Lardinois S."/>
            <person name="Lauber J."/>
            <person name="Lazarevic V."/>
            <person name="Lee S.-M."/>
            <person name="Levine A."/>
            <person name="Liu H."/>
            <person name="Masuda S."/>
            <person name="Mauel C."/>
            <person name="Medigue C."/>
            <person name="Medina N."/>
            <person name="Mellado R.P."/>
            <person name="Mizuno M."/>
            <person name="Moestl D."/>
            <person name="Nakai S."/>
            <person name="Noback M."/>
            <person name="Noone D."/>
            <person name="O'Reilly M."/>
            <person name="Ogawa K."/>
            <person name="Ogiwara A."/>
            <person name="Oudega B."/>
            <person name="Park S.-H."/>
            <person name="Parro V."/>
            <person name="Pohl T.M."/>
            <person name="Portetelle D."/>
            <person name="Porwollik S."/>
            <person name="Prescott A.M."/>
            <person name="Presecan E."/>
            <person name="Pujic P."/>
            <person name="Purnelle B."/>
            <person name="Rapoport G."/>
            <person name="Rey M."/>
            <person name="Reynolds S."/>
            <person name="Rieger M."/>
            <person name="Rivolta C."/>
            <person name="Rocha E."/>
            <person name="Roche B."/>
            <person name="Rose M."/>
            <person name="Sadaie Y."/>
            <person name="Sato T."/>
            <person name="Scanlan E."/>
            <person name="Schleich S."/>
            <person name="Schroeter R."/>
            <person name="Scoffone F."/>
            <person name="Sekiguchi J."/>
            <person name="Sekowska A."/>
            <person name="Seror S.J."/>
            <person name="Serror P."/>
            <person name="Shin B.-S."/>
            <person name="Soldo B."/>
            <person name="Sorokin A."/>
            <person name="Tacconi E."/>
            <person name="Takagi T."/>
            <person name="Takahashi H."/>
            <person name="Takemaru K."/>
            <person name="Takeuchi M."/>
            <person name="Tamakoshi A."/>
            <person name="Tanaka T."/>
            <person name="Terpstra P."/>
            <person name="Tognoni A."/>
            <person name="Tosato V."/>
            <person name="Uchiyama S."/>
            <person name="Vandenbol M."/>
            <person name="Vannier F."/>
            <person name="Vassarotti A."/>
            <person name="Viari A."/>
            <person name="Wambutt R."/>
            <person name="Wedler E."/>
            <person name="Wedler H."/>
            <person name="Weitzenegger T."/>
            <person name="Winters P."/>
            <person name="Wipat A."/>
            <person name="Yamamoto H."/>
            <person name="Yamane K."/>
            <person name="Yasumoto K."/>
            <person name="Yata K."/>
            <person name="Yoshida K."/>
            <person name="Yoshikawa H.-F."/>
            <person name="Zumstein E."/>
            <person name="Yoshikawa H."/>
            <person name="Danchin A."/>
        </authorList>
    </citation>
    <scope>NUCLEOTIDE SEQUENCE [LARGE SCALE GENOMIC DNA]</scope>
    <source>
        <strain>168</strain>
    </source>
</reference>
<reference evidence="5" key="3">
    <citation type="journal article" date="2022" name="RNA">
        <title>The Bacillus subtilis open reading frame ysgA encodes the SPOUT methyltransferase RlmP forming 2'-O-methylguanosine at position 2553 in the A-loop of 23S rRNA.</title>
        <authorList>
            <person name="Roovers M."/>
            <person name="Labar G."/>
            <person name="Wolff P."/>
            <person name="Feller A."/>
            <person name="Van Elder D."/>
            <person name="Soin R."/>
            <person name="Gueydan C."/>
            <person name="Kruys V."/>
            <person name="Droogmans L."/>
        </authorList>
    </citation>
    <scope>X-RAY CRYSTALLOGRAPHY (1.88 ANGSTROMS)</scope>
    <scope>FUNCTION</scope>
    <scope>CATALYTIC ACTIVITY</scope>
    <scope>SUBUNIT</scope>
    <scope>DOMAIN</scope>
    <scope>DISRUPTION PHENOTYPE</scope>
    <scope>MUTAGENESIS OF ASN-117; ARG-123; GLU-206 AND ASN-234</scope>
    <source>
        <strain>168</strain>
    </source>
</reference>
<evidence type="ECO:0000250" key="1">
    <source>
        <dbReference type="UniProtKB" id="P18644"/>
    </source>
</evidence>
<evidence type="ECO:0000269" key="2">
    <source>
    </source>
</evidence>
<evidence type="ECO:0000303" key="3">
    <source>
    </source>
</evidence>
<evidence type="ECO:0000305" key="4"/>
<evidence type="ECO:0007744" key="5">
    <source>
        <dbReference type="PDB" id="7QIU"/>
    </source>
</evidence>
<evidence type="ECO:0007829" key="6">
    <source>
        <dbReference type="PDB" id="7QIU"/>
    </source>
</evidence>
<comment type="function">
    <text evidence="2">Specifically methylates the ribose of guanosine 2553 (G2553) in 23S rRNA (PubMed:35710145). When the target G2553 is mutated, is able to methylate the ribose of adenosine, but it cannot methylate cytidine nor uridine (PubMed:35710145). Modifies free 23S rRNA but not the fully assembled ribosome nor the 50S subunit, suggesting that the modification occurs early during ribosome biogenesis (PubMed:35710145).</text>
</comment>
<comment type="catalytic activity">
    <reaction evidence="2">
        <text>guanosine(2553) in 23S rRNA + S-adenosyl-L-methionine = 2'-O-methylguanosine(2553) in 23S rRNA + S-adenosyl-L-homocysteine + H(+)</text>
        <dbReference type="Rhea" id="RHEA:73759"/>
        <dbReference type="Rhea" id="RHEA-COMP:18248"/>
        <dbReference type="Rhea" id="RHEA-COMP:18249"/>
        <dbReference type="ChEBI" id="CHEBI:15378"/>
        <dbReference type="ChEBI" id="CHEBI:57856"/>
        <dbReference type="ChEBI" id="CHEBI:59789"/>
        <dbReference type="ChEBI" id="CHEBI:74269"/>
        <dbReference type="ChEBI" id="CHEBI:74445"/>
    </reaction>
    <physiologicalReaction direction="left-to-right" evidence="2">
        <dbReference type="Rhea" id="RHEA:73760"/>
    </physiologicalReaction>
</comment>
<comment type="subunit">
    <text evidence="2">Homodimer.</text>
</comment>
<comment type="subcellular location">
    <subcellularLocation>
        <location evidence="4">Cytoplasm</location>
    </subcellularLocation>
</comment>
<comment type="domain">
    <text evidence="2">Contains an extended N-terminal domain, which probably binds RNA, connected by an interdomain linker to a C-terminal catalytic domain, which adopts a typical SPOUT fold.</text>
</comment>
<comment type="disruption phenotype">
    <text evidence="2">Mutant strain lacks G2553 methylation in 23S rRNA (PubMed:35710145). Loss of the gene does not affect growth nor lead to ribosome assembly intermediates accumulation (PubMed:35710145).</text>
</comment>
<comment type="similarity">
    <text evidence="4">Belongs to the class IV-like SAM-binding methyltransferase superfamily. RNA methyltransferase TrmH family.</text>
</comment>
<organism>
    <name type="scientific">Bacillus subtilis (strain 168)</name>
    <dbReference type="NCBI Taxonomy" id="224308"/>
    <lineage>
        <taxon>Bacteria</taxon>
        <taxon>Bacillati</taxon>
        <taxon>Bacillota</taxon>
        <taxon>Bacilli</taxon>
        <taxon>Bacillales</taxon>
        <taxon>Bacillaceae</taxon>
        <taxon>Bacillus</taxon>
    </lineage>
</organism>